<proteinExistence type="evidence at protein level"/>
<accession>P23295</accession>
<feature type="initiator methionine" description="Removed" evidence="9">
    <location>
        <position position="1"/>
    </location>
</feature>
<feature type="chain" id="PRO_0000052039" description="NADP nitrous oxide-forming nitric oxide reductase">
    <location>
        <begin position="2"/>
        <end position="403"/>
    </location>
</feature>
<feature type="region of interest" description="Disordered" evidence="1">
    <location>
        <begin position="1"/>
        <end position="21"/>
    </location>
</feature>
<feature type="binding site" description="axial binding residue">
    <location>
        <position position="352"/>
    </location>
    <ligand>
        <name>heme</name>
        <dbReference type="ChEBI" id="CHEBI:30413"/>
    </ligand>
    <ligandPart>
        <name>Fe</name>
        <dbReference type="ChEBI" id="CHEBI:18248"/>
    </ligandPart>
</feature>
<feature type="modified residue" description="N-acetylalanine" evidence="9">
    <location>
        <position position="2"/>
    </location>
</feature>
<feature type="mutagenesis site" description="Impairs interaction with NADH." evidence="4">
    <original>R</original>
    <variation>E</variation>
    <location>
        <position position="64"/>
    </location>
</feature>
<feature type="mutagenesis site" description="Decreases the NADPH-dependent activity." evidence="4">
    <original>S</original>
    <variation>A</variation>
    <location>
        <position position="73"/>
    </location>
</feature>
<feature type="mutagenesis site" description="Decreases the NADPH-dependent activity." evidence="4">
    <original>S</original>
    <variation>A</variation>
    <location>
        <position position="75"/>
    </location>
</feature>
<feature type="mutagenesis site" description="Improves the NADPH-dependent activity." evidence="4">
    <original>S</original>
    <variation>G</variation>
    <location>
        <position position="75"/>
    </location>
</feature>
<feature type="mutagenesis site" description="Decreases the NADPH-dependent activity." evidence="4">
    <original>G</original>
    <variation>A</variation>
    <location>
        <position position="76"/>
    </location>
</feature>
<feature type="mutagenesis site" description="Decreases the NADPH-dependent activity." evidence="4">
    <original>K</original>
    <variation>A</variation>
    <location>
        <position position="77"/>
    </location>
</feature>
<feature type="mutagenesis site" description="Decreases the NADPH-dependent activity." evidence="4">
    <original>Q</original>
    <variation>A</variation>
    <location>
        <position position="78"/>
    </location>
</feature>
<feature type="mutagenesis site" description="Impairs interaction with NADH." evidence="4">
    <original>R</original>
    <variation>E</variation>
    <location>
        <position position="174"/>
    </location>
</feature>
<feature type="mutagenesis site" description="Impairs catalytic activity." evidence="2 3">
    <original>S</original>
    <variation>V</variation>
    <variation>T</variation>
    <location>
        <position position="286"/>
    </location>
</feature>
<feature type="mutagenesis site" description="Impairs catalytic activity." evidence="2">
    <original>D</original>
    <variation>V</variation>
    <variation>L</variation>
    <location>
        <position position="393"/>
    </location>
</feature>
<feature type="strand" evidence="13">
    <location>
        <begin position="7"/>
        <end position="9"/>
    </location>
</feature>
<feature type="strand" evidence="12">
    <location>
        <begin position="13"/>
        <end position="17"/>
    </location>
</feature>
<feature type="helix" evidence="13">
    <location>
        <begin position="21"/>
        <end position="28"/>
    </location>
</feature>
<feature type="strand" evidence="13">
    <location>
        <begin position="30"/>
        <end position="35"/>
    </location>
</feature>
<feature type="strand" evidence="13">
    <location>
        <begin position="41"/>
        <end position="45"/>
    </location>
</feature>
<feature type="helix" evidence="13">
    <location>
        <begin position="48"/>
        <end position="56"/>
    </location>
</feature>
<feature type="strand" evidence="15">
    <location>
        <begin position="64"/>
        <end position="66"/>
    </location>
</feature>
<feature type="helix" evidence="13">
    <location>
        <begin position="74"/>
        <end position="79"/>
    </location>
</feature>
<feature type="helix" evidence="13">
    <location>
        <begin position="86"/>
        <end position="88"/>
    </location>
</feature>
<feature type="helix" evidence="13">
    <location>
        <begin position="93"/>
        <end position="98"/>
    </location>
</feature>
<feature type="turn" evidence="13">
    <location>
        <begin position="99"/>
        <end position="101"/>
    </location>
</feature>
<feature type="helix" evidence="13">
    <location>
        <begin position="102"/>
        <end position="105"/>
    </location>
</feature>
<feature type="helix" evidence="13">
    <location>
        <begin position="107"/>
        <end position="131"/>
    </location>
</feature>
<feature type="strand" evidence="14">
    <location>
        <begin position="134"/>
        <end position="136"/>
    </location>
</feature>
<feature type="helix" evidence="13">
    <location>
        <begin position="140"/>
        <end position="143"/>
    </location>
</feature>
<feature type="turn" evidence="13">
    <location>
        <begin position="144"/>
        <end position="146"/>
    </location>
</feature>
<feature type="helix" evidence="13">
    <location>
        <begin position="147"/>
        <end position="157"/>
    </location>
</feature>
<feature type="helix" evidence="13">
    <location>
        <begin position="161"/>
        <end position="163"/>
    </location>
</feature>
<feature type="helix" evidence="13">
    <location>
        <begin position="164"/>
        <end position="175"/>
    </location>
</feature>
<feature type="strand" evidence="11">
    <location>
        <begin position="177"/>
        <end position="179"/>
    </location>
</feature>
<feature type="helix" evidence="13">
    <location>
        <begin position="181"/>
        <end position="204"/>
    </location>
</feature>
<feature type="helix" evidence="13">
    <location>
        <begin position="210"/>
        <end position="217"/>
    </location>
</feature>
<feature type="turn" evidence="13">
    <location>
        <begin position="218"/>
        <end position="222"/>
    </location>
</feature>
<feature type="helix" evidence="13">
    <location>
        <begin position="226"/>
        <end position="257"/>
    </location>
</feature>
<feature type="helix" evidence="13">
    <location>
        <begin position="259"/>
        <end position="267"/>
    </location>
</feature>
<feature type="helix" evidence="13">
    <location>
        <begin position="269"/>
        <end position="271"/>
    </location>
</feature>
<feature type="helix" evidence="13">
    <location>
        <begin position="272"/>
        <end position="282"/>
    </location>
</feature>
<feature type="strand" evidence="13">
    <location>
        <begin position="291"/>
        <end position="296"/>
    </location>
</feature>
<feature type="strand" evidence="13">
    <location>
        <begin position="298"/>
        <end position="300"/>
    </location>
</feature>
<feature type="strand" evidence="13">
    <location>
        <begin position="303"/>
        <end position="305"/>
    </location>
</feature>
<feature type="strand" evidence="13">
    <location>
        <begin position="310"/>
        <end position="313"/>
    </location>
</feature>
<feature type="helix" evidence="13">
    <location>
        <begin position="315"/>
        <end position="318"/>
    </location>
</feature>
<feature type="turn" evidence="13">
    <location>
        <begin position="322"/>
        <end position="324"/>
    </location>
</feature>
<feature type="strand" evidence="13">
    <location>
        <begin position="325"/>
        <end position="327"/>
    </location>
</feature>
<feature type="helix" evidence="13">
    <location>
        <begin position="348"/>
        <end position="350"/>
    </location>
</feature>
<feature type="helix" evidence="13">
    <location>
        <begin position="355"/>
        <end position="372"/>
    </location>
</feature>
<feature type="strand" evidence="13">
    <location>
        <begin position="377"/>
        <end position="380"/>
    </location>
</feature>
<feature type="helix" evidence="13">
    <location>
        <begin position="382"/>
        <end position="384"/>
    </location>
</feature>
<feature type="strand" evidence="13">
    <location>
        <begin position="396"/>
        <end position="398"/>
    </location>
</feature>
<feature type="strand" evidence="13">
    <location>
        <begin position="400"/>
        <end position="402"/>
    </location>
</feature>
<reference key="1">
    <citation type="journal article" date="1991" name="J. Biol. Chem.">
        <title>Nucleotide sequence of the unique nitrate/nitrite-inducible cytochrome P-450 cDNA from Fusarium oxysporum.</title>
        <authorList>
            <person name="Kizawa H."/>
            <person name="Tomura D."/>
            <person name="Oda M."/>
            <person name="Fukamizu A."/>
            <person name="Hoshino T."/>
            <person name="Gotoh O."/>
            <person name="Yasui T."/>
            <person name="Shoun H."/>
        </authorList>
    </citation>
    <scope>NUCLEOTIDE SEQUENCE [MRNA]</scope>
    <scope>PARTIAL PROTEIN SEQUENCE</scope>
    <scope>INDUCTION</scope>
    <source>
        <strain>MT-811</strain>
    </source>
</reference>
<reference key="2">
    <citation type="journal article" date="1994" name="J. Biochem.">
        <title>Nitric oxide reductase cytochrome P-450 gene, CYP 55, of the fungus Fusarium oxysporum containing a potential binding-site for FNR, the transcription factor involved in the regulation of anaerobic growth of Escherichia coli.</title>
        <authorList>
            <person name="Tomura D."/>
            <person name="Obika K."/>
            <person name="Fukamizu A."/>
            <person name="Shoun H."/>
        </authorList>
    </citation>
    <scope>NUCLEOTIDE SEQUENCE [GENOMIC DNA]</scope>
    <source>
        <strain>MT-811</strain>
    </source>
</reference>
<reference key="3">
    <citation type="journal article" date="1996" name="J. Biochem.">
        <title>N-terminal processing and amino acid sequence of two isoforms of nitric oxide reductase cytochrome P450nor from Fusarium oxysporum.</title>
        <authorList>
            <person name="Nakahara K."/>
            <person name="Shoun H."/>
        </authorList>
    </citation>
    <scope>PROTEIN SEQUENCE OF 2-11</scope>
    <scope>ACETYLATION AT ALA-2</scope>
</reference>
<reference key="4">
    <citation type="journal article" date="1991" name="J. Biol. Chem.">
        <title>Denitrification by the fungus Fusarium oxysporum and involvement of cytochrome P-450 in the respiratory nitrite reduction.</title>
        <authorList>
            <person name="Shoun H."/>
            <person name="Tanimoto T."/>
        </authorList>
    </citation>
    <scope>CATALYTIC ACTIVITY</scope>
    <scope>ACTIVITY REGULATION</scope>
    <scope>FUNCTION</scope>
</reference>
<reference key="5">
    <citation type="journal article" date="1995" name="J. Biol. Chem.">
        <title>Spectroscopic and kinetic studies on reaction of cytochrome P450nor with nitric oxide. Implication for its nitric oxide reduction mechanism.</title>
        <authorList>
            <person name="Shiro Y."/>
            <person name="Fujii M."/>
            <person name="Iizuka T."/>
            <person name="Adachi S."/>
            <person name="Tsukamoto K."/>
            <person name="Nakahara K."/>
            <person name="Shoun H."/>
        </authorList>
    </citation>
    <scope>CATALYTIC ACTIVITY</scope>
</reference>
<reference key="6">
    <citation type="journal article" date="2002" name="J. Biol. Chem.">
        <title>The B' helix determines cytochrome P450nor specificity for the electron donors NADH and NADPH.</title>
        <authorList>
            <person name="Zhang L."/>
            <person name="Kudo T."/>
            <person name="Takaya N."/>
            <person name="Shoun H."/>
        </authorList>
    </citation>
    <scope>FUNCTION</scope>
    <scope>MUTAGENESIS OF ARG-64; SER-73; SER-75; GLY-76; LYS-77; GLN-78 AND ARG-174</scope>
</reference>
<reference key="7">
    <citation type="journal article" date="1997" name="Nat. Struct. Biol.">
        <title>Crystal structure of nitric oxide reductase from denitrifying fungus Fusarium oxysporum.</title>
        <authorList>
            <person name="Park S.-Y."/>
            <person name="Shimizu H."/>
            <person name="Adachi S."/>
            <person name="Nakagawa A."/>
            <person name="Tanaka I."/>
            <person name="Nakahara K."/>
            <person name="Shoun H."/>
            <person name="Obayashi E."/>
            <person name="Nakamura H."/>
            <person name="Iizuka T."/>
            <person name="Shiro Y."/>
        </authorList>
    </citation>
    <scope>X-RAY CRYSTALLOGRAPHY (2.0 ANGSTROMS)</scope>
</reference>
<reference key="8">
    <citation type="journal article" date="2000" name="J. Biol. Chem.">
        <title>Proton delivery in NO reduction by fungal nitric-oxide reductase. Cryogenic crystallography, spectroscopy, and kinetics of ferric-NO complexes of wild-type and mutant enzymes.</title>
        <authorList>
            <person name="Shimizu H."/>
            <person name="Obayashi E."/>
            <person name="Gomi Y."/>
            <person name="Arakawa H."/>
            <person name="Park S.-Y."/>
            <person name="Nakamura H."/>
            <person name="Adachi S."/>
            <person name="Shoun H."/>
            <person name="Shiro Y."/>
        </authorList>
    </citation>
    <scope>X-RAY CRYSTALLOGRAPHY (1.7 ANGSTROMS) OF 2-403 IN COMPLEX WITH HEME</scope>
    <scope>CATALYTIC ACTIVITY</scope>
    <scope>MUTAGENESIS OF SER-286 AND ASP-393</scope>
</reference>
<reference key="9">
    <citation type="journal article" date="2000" name="J. Inorg. Biochem.">
        <title>Crystal structures of cytochrome P450nor and its mutants (Ser286--&gt;Val, Thr) in the ferric resting state at cryogenic temperature: a comparative analysis with monooxygenase cytochrome P450s.</title>
        <authorList>
            <person name="Shimizu H."/>
            <person name="Park S."/>
            <person name="Lee D."/>
            <person name="Shoun H."/>
            <person name="Shiro Y."/>
        </authorList>
    </citation>
    <scope>X-RAY CRYSTALLOGRAPHY (1.7 ANGSTROMS) OF 2-402 IN COMPLEX WITH HEME OF WILD TYPE; MUTANT VAL-286 AND MUTANT THR-286</scope>
    <scope>MUTAGENESIS OF SER-286</scope>
</reference>
<reference key="10">
    <citation type="journal article" date="2000" name="J. Inorg. Biochem.">
        <title>Mutation effects of a conserved threonine (Thr243) of cytochrome P450nor on its structure and function.</title>
        <authorList>
            <person name="Obayashi E."/>
            <person name="Shimizu H."/>
            <person name="Park S.Y."/>
            <person name="Shoun H."/>
            <person name="Shiro Y."/>
        </authorList>
    </citation>
    <scope>X-RAY CRYSTALLOGRAPHY (1.4 ANGSTROMS) OF 2-402 IN COMPLEX WITH HEME</scope>
</reference>
<reference key="11">
    <citation type="journal article" date="2001" name="J. Biol. Chem.">
        <title>A positively charged cluster formed in the heme-distal pocket of cytochrome P450nor is essential for interaction with NADH.</title>
        <authorList>
            <person name="Kudo T."/>
            <person name="Takaya N."/>
            <person name="Park S.Y."/>
            <person name="Shiro Y."/>
            <person name="Shoun H."/>
        </authorList>
    </citation>
    <scope>X-RAY CRYSTALLOGRAPHY (2.0 ANGSTROMS) IN COMPLEX WITH HEME</scope>
</reference>
<reference key="12">
    <citation type="journal article" date="2001" name="Biochemistry">
        <title>Structural characterization of n-butyl-isocyanide complexes of cytochromes P450nor and P450cam.</title>
        <authorList>
            <person name="Lee D.-S."/>
            <person name="Park S.-Y."/>
            <person name="Yamane K."/>
            <person name="Obayashi E."/>
            <person name="Hori H."/>
            <person name="Shiro Y."/>
        </authorList>
    </citation>
    <scope>X-RAY CRYSTALLOGRAPHY (1.5 ANGSTROMS) IN COMPLEX WITH HEME</scope>
</reference>
<reference key="13">
    <citation type="journal article" date="2002" name="Acta Crystallogr. D">
        <title>X-ray structure of nitric oxide reductase (cytochrome P450nor) at atomic resolution.</title>
        <authorList>
            <person name="Shimizu H."/>
            <person name="Park S.-Y."/>
            <person name="Shiro Y."/>
            <person name="Adachi S."/>
        </authorList>
    </citation>
    <scope>X-RAY CRYSTALLOGRAPHY (1.0 ANGSTROMS) IN COMPLEX WITH HEME</scope>
</reference>
<reference key="14">
    <citation type="journal article" date="2004" name="J. Mol. Biol.">
        <title>Structural evidence for direct hydride transfer from NADH to cytochrome P450nor.</title>
        <authorList>
            <person name="Oshima R."/>
            <person name="Fushinobu S."/>
            <person name="Su F."/>
            <person name="Zhang L."/>
            <person name="Takaya N."/>
            <person name="Shoun H."/>
        </authorList>
    </citation>
    <scope>X-RAY CRYSTALLOGRAPHY (1.8 ANGSTROMS) IN COMPLEX WITH HEME</scope>
    <scope>CATALYTIC ACTIVITY</scope>
</reference>
<protein>
    <recommendedName>
        <fullName>NADP nitrous oxide-forming nitric oxide reductase</fullName>
        <shortName>NOR</shortName>
        <ecNumber>1.7.1.14</ecNumber>
    </recommendedName>
    <alternativeName>
        <fullName>CYPLVA1</fullName>
    </alternativeName>
    <alternativeName>
        <fullName>Cytochrome P450 55A1</fullName>
    </alternativeName>
    <alternativeName>
        <fullName>Cytochrome P450 DNIR</fullName>
    </alternativeName>
    <alternativeName>
        <fullName>Cytochrome P450nor</fullName>
    </alternativeName>
    <alternativeName>
        <fullName>Fungal nitric oxide reductase</fullName>
    </alternativeName>
</protein>
<evidence type="ECO:0000256" key="1">
    <source>
        <dbReference type="SAM" id="MobiDB-lite"/>
    </source>
</evidence>
<evidence type="ECO:0000269" key="2">
    <source>
    </source>
</evidence>
<evidence type="ECO:0000269" key="3">
    <source>
    </source>
</evidence>
<evidence type="ECO:0000269" key="4">
    <source>
    </source>
</evidence>
<evidence type="ECO:0000269" key="5">
    <source>
    </source>
</evidence>
<evidence type="ECO:0000269" key="6">
    <source>
    </source>
</evidence>
<evidence type="ECO:0000269" key="7">
    <source>
    </source>
</evidence>
<evidence type="ECO:0000269" key="8">
    <source>
    </source>
</evidence>
<evidence type="ECO:0000269" key="9">
    <source>
    </source>
</evidence>
<evidence type="ECO:0000305" key="10"/>
<evidence type="ECO:0007829" key="11">
    <source>
        <dbReference type="PDB" id="1CL6"/>
    </source>
</evidence>
<evidence type="ECO:0007829" key="12">
    <source>
        <dbReference type="PDB" id="1GED"/>
    </source>
</evidence>
<evidence type="ECO:0007829" key="13">
    <source>
        <dbReference type="PDB" id="1JFB"/>
    </source>
</evidence>
<evidence type="ECO:0007829" key="14">
    <source>
        <dbReference type="PDB" id="1ULW"/>
    </source>
</evidence>
<evidence type="ECO:0007829" key="15">
    <source>
        <dbReference type="PDB" id="2ROM"/>
    </source>
</evidence>
<keyword id="KW-0002">3D-structure</keyword>
<keyword id="KW-0007">Acetylation</keyword>
<keyword id="KW-0903">Direct protein sequencing</keyword>
<keyword id="KW-0349">Heme</keyword>
<keyword id="KW-0408">Iron</keyword>
<keyword id="KW-0479">Metal-binding</keyword>
<keyword id="KW-0503">Monooxygenase</keyword>
<keyword id="KW-0520">NAD</keyword>
<keyword id="KW-0521">NADP</keyword>
<keyword id="KW-0560">Oxidoreductase</keyword>
<dbReference type="EC" id="1.7.1.14"/>
<dbReference type="EMBL" id="M63340">
    <property type="protein sequence ID" value="AAA33337.1"/>
    <property type="molecule type" value="mRNA"/>
</dbReference>
<dbReference type="EMBL" id="D14517">
    <property type="protein sequence ID" value="BAA03390.1"/>
    <property type="molecule type" value="Genomic_DNA"/>
</dbReference>
<dbReference type="PIR" id="JC5150">
    <property type="entry name" value="JC5150"/>
</dbReference>
<dbReference type="PIR" id="JC5151">
    <property type="entry name" value="JC5151"/>
</dbReference>
<dbReference type="PDB" id="1CL6">
    <property type="method" value="X-ray"/>
    <property type="resolution" value="1.70 A"/>
    <property type="chains" value="A=2-403"/>
</dbReference>
<dbReference type="PDB" id="1CMJ">
    <property type="method" value="X-ray"/>
    <property type="resolution" value="1.70 A"/>
    <property type="chains" value="A=2-403"/>
</dbReference>
<dbReference type="PDB" id="1CMN">
    <property type="method" value="X-ray"/>
    <property type="resolution" value="1.70 A"/>
    <property type="chains" value="A=2-403"/>
</dbReference>
<dbReference type="PDB" id="1EHE">
    <property type="method" value="X-ray"/>
    <property type="resolution" value="1.70 A"/>
    <property type="chains" value="A=2-403"/>
</dbReference>
<dbReference type="PDB" id="1EHF">
    <property type="method" value="X-ray"/>
    <property type="resolution" value="1.70 A"/>
    <property type="chains" value="A=2-403"/>
</dbReference>
<dbReference type="PDB" id="1EHG">
    <property type="method" value="X-ray"/>
    <property type="resolution" value="1.70 A"/>
    <property type="chains" value="A=2-403"/>
</dbReference>
<dbReference type="PDB" id="1F24">
    <property type="method" value="X-ray"/>
    <property type="resolution" value="1.40 A"/>
    <property type="chains" value="A=2-403"/>
</dbReference>
<dbReference type="PDB" id="1F25">
    <property type="method" value="X-ray"/>
    <property type="resolution" value="1.40 A"/>
    <property type="chains" value="A=2-403"/>
</dbReference>
<dbReference type="PDB" id="1F26">
    <property type="method" value="X-ray"/>
    <property type="resolution" value="1.40 A"/>
    <property type="chains" value="A=2-403"/>
</dbReference>
<dbReference type="PDB" id="1GED">
    <property type="method" value="X-ray"/>
    <property type="resolution" value="2.00 A"/>
    <property type="chains" value="A=1-403"/>
</dbReference>
<dbReference type="PDB" id="1GEI">
    <property type="method" value="X-ray"/>
    <property type="resolution" value="1.60 A"/>
    <property type="chains" value="A=1-403"/>
</dbReference>
<dbReference type="PDB" id="1GEJ">
    <property type="method" value="X-ray"/>
    <property type="resolution" value="1.50 A"/>
    <property type="chains" value="A=1-403"/>
</dbReference>
<dbReference type="PDB" id="1JFB">
    <property type="method" value="X-ray"/>
    <property type="resolution" value="1.00 A"/>
    <property type="chains" value="A=1-403"/>
</dbReference>
<dbReference type="PDB" id="1JFC">
    <property type="method" value="X-ray"/>
    <property type="resolution" value="1.05 A"/>
    <property type="chains" value="A=1-403"/>
</dbReference>
<dbReference type="PDB" id="1ROM">
    <property type="method" value="X-ray"/>
    <property type="resolution" value="2.00 A"/>
    <property type="chains" value="A=1-403"/>
</dbReference>
<dbReference type="PDB" id="1ULW">
    <property type="method" value="X-ray"/>
    <property type="resolution" value="2.00 A"/>
    <property type="chains" value="A=2-403"/>
</dbReference>
<dbReference type="PDB" id="1XQD">
    <property type="method" value="X-ray"/>
    <property type="resolution" value="1.80 A"/>
    <property type="chains" value="A=1-403"/>
</dbReference>
<dbReference type="PDB" id="2ROM">
    <property type="method" value="X-ray"/>
    <property type="resolution" value="2.00 A"/>
    <property type="chains" value="A=1-403"/>
</dbReference>
<dbReference type="PDB" id="5Y5F">
    <property type="method" value="X-ray"/>
    <property type="resolution" value="1.50 A"/>
    <property type="chains" value="A=1-403"/>
</dbReference>
<dbReference type="PDB" id="5Y5G">
    <property type="method" value="X-ray"/>
    <property type="resolution" value="1.36 A"/>
    <property type="chains" value="A=1-403"/>
</dbReference>
<dbReference type="PDB" id="5Y5H">
    <property type="method" value="X-ray"/>
    <property type="resolution" value="1.50 A"/>
    <property type="chains" value="A=1-403"/>
</dbReference>
<dbReference type="PDB" id="5Y5I">
    <property type="method" value="X-ray"/>
    <property type="resolution" value="2.10 A"/>
    <property type="chains" value="A/B=1-403"/>
</dbReference>
<dbReference type="PDB" id="5Y5J">
    <property type="method" value="X-ray"/>
    <property type="resolution" value="2.00 A"/>
    <property type="chains" value="A/B=1-403"/>
</dbReference>
<dbReference type="PDB" id="5Y5K">
    <property type="method" value="X-ray"/>
    <property type="resolution" value="2.10 A"/>
    <property type="chains" value="A/B=1-403"/>
</dbReference>
<dbReference type="PDB" id="5Y5L">
    <property type="method" value="X-ray"/>
    <property type="resolution" value="2.10 A"/>
    <property type="chains" value="A/B=1-403"/>
</dbReference>
<dbReference type="PDB" id="5Y5M">
    <property type="method" value="X-ray"/>
    <property type="resolution" value="2.10 A"/>
    <property type="chains" value="A/B=1-403"/>
</dbReference>
<dbReference type="PDB" id="7DVO">
    <property type="method" value="X-ray"/>
    <property type="resolution" value="1.80 A"/>
    <property type="chains" value="A/B=1-403"/>
</dbReference>
<dbReference type="PDBsum" id="1CL6"/>
<dbReference type="PDBsum" id="1CMJ"/>
<dbReference type="PDBsum" id="1CMN"/>
<dbReference type="PDBsum" id="1EHE"/>
<dbReference type="PDBsum" id="1EHF"/>
<dbReference type="PDBsum" id="1EHG"/>
<dbReference type="PDBsum" id="1F24"/>
<dbReference type="PDBsum" id="1F25"/>
<dbReference type="PDBsum" id="1F26"/>
<dbReference type="PDBsum" id="1GED"/>
<dbReference type="PDBsum" id="1GEI"/>
<dbReference type="PDBsum" id="1GEJ"/>
<dbReference type="PDBsum" id="1JFB"/>
<dbReference type="PDBsum" id="1JFC"/>
<dbReference type="PDBsum" id="1ROM"/>
<dbReference type="PDBsum" id="1ULW"/>
<dbReference type="PDBsum" id="1XQD"/>
<dbReference type="PDBsum" id="2ROM"/>
<dbReference type="PDBsum" id="5Y5F"/>
<dbReference type="PDBsum" id="5Y5G"/>
<dbReference type="PDBsum" id="5Y5H"/>
<dbReference type="PDBsum" id="5Y5I"/>
<dbReference type="PDBsum" id="5Y5J"/>
<dbReference type="PDBsum" id="5Y5K"/>
<dbReference type="PDBsum" id="5Y5L"/>
<dbReference type="PDBsum" id="5Y5M"/>
<dbReference type="PDBsum" id="7DVO"/>
<dbReference type="SMR" id="P23295"/>
<dbReference type="iPTMnet" id="P23295"/>
<dbReference type="KEGG" id="ag:AAA33337"/>
<dbReference type="VEuPathDB" id="FungiDB:FOC1_g10003638"/>
<dbReference type="VEuPathDB" id="FungiDB:FOC4_g10005240"/>
<dbReference type="VEuPathDB" id="FungiDB:FOIG_14362"/>
<dbReference type="VEuPathDB" id="FungiDB:FOMG_14889"/>
<dbReference type="VEuPathDB" id="FungiDB:FOXG_12350"/>
<dbReference type="VEuPathDB" id="FungiDB:FOZG_13098"/>
<dbReference type="VEuPathDB" id="FungiDB:HZS61_006914"/>
<dbReference type="BioCyc" id="MetaCyc:MONOMER-16203"/>
<dbReference type="BRENDA" id="1.7.1.14">
    <property type="organism ID" value="2351"/>
</dbReference>
<dbReference type="BRENDA" id="1.7.2.5">
    <property type="organism ID" value="2351"/>
</dbReference>
<dbReference type="SABIO-RK" id="P23295"/>
<dbReference type="EvolutionaryTrace" id="P23295"/>
<dbReference type="GO" id="GO:0020037">
    <property type="term" value="F:heme binding"/>
    <property type="evidence" value="ECO:0007669"/>
    <property type="project" value="InterPro"/>
</dbReference>
<dbReference type="GO" id="GO:0005506">
    <property type="term" value="F:iron ion binding"/>
    <property type="evidence" value="ECO:0007669"/>
    <property type="project" value="InterPro"/>
</dbReference>
<dbReference type="GO" id="GO:0004497">
    <property type="term" value="F:monooxygenase activity"/>
    <property type="evidence" value="ECO:0007669"/>
    <property type="project" value="UniProtKB-KW"/>
</dbReference>
<dbReference type="GO" id="GO:0102199">
    <property type="term" value="F:nitric oxide reductase (NAD(P)H) activity"/>
    <property type="evidence" value="ECO:0007669"/>
    <property type="project" value="UniProtKB-EC"/>
</dbReference>
<dbReference type="GO" id="GO:0016705">
    <property type="term" value="F:oxidoreductase activity, acting on paired donors, with incorporation or reduction of molecular oxygen"/>
    <property type="evidence" value="ECO:0007669"/>
    <property type="project" value="InterPro"/>
</dbReference>
<dbReference type="CDD" id="cd11030">
    <property type="entry name" value="CYP105-like"/>
    <property type="match status" value="1"/>
</dbReference>
<dbReference type="FunFam" id="1.10.630.10:FF:000018">
    <property type="entry name" value="Cytochrome P450 monooxygenase"/>
    <property type="match status" value="1"/>
</dbReference>
<dbReference type="Gene3D" id="1.10.630.10">
    <property type="entry name" value="Cytochrome P450"/>
    <property type="match status" value="1"/>
</dbReference>
<dbReference type="InterPro" id="IPR001128">
    <property type="entry name" value="Cyt_P450"/>
</dbReference>
<dbReference type="InterPro" id="IPR002397">
    <property type="entry name" value="Cyt_P450_B"/>
</dbReference>
<dbReference type="InterPro" id="IPR017972">
    <property type="entry name" value="Cyt_P450_CS"/>
</dbReference>
<dbReference type="InterPro" id="IPR036396">
    <property type="entry name" value="Cyt_P450_sf"/>
</dbReference>
<dbReference type="PANTHER" id="PTHR46696">
    <property type="entry name" value="P450, PUTATIVE (EUROFUNG)-RELATED"/>
    <property type="match status" value="1"/>
</dbReference>
<dbReference type="PANTHER" id="PTHR46696:SF6">
    <property type="entry name" value="P450, PUTATIVE (EUROFUNG)-RELATED"/>
    <property type="match status" value="1"/>
</dbReference>
<dbReference type="Pfam" id="PF00067">
    <property type="entry name" value="p450"/>
    <property type="match status" value="2"/>
</dbReference>
<dbReference type="PRINTS" id="PR00359">
    <property type="entry name" value="BP450"/>
</dbReference>
<dbReference type="SUPFAM" id="SSF48264">
    <property type="entry name" value="Cytochrome P450"/>
    <property type="match status" value="1"/>
</dbReference>
<dbReference type="PROSITE" id="PS00086">
    <property type="entry name" value="CYTOCHROME_P450"/>
    <property type="match status" value="1"/>
</dbReference>
<sequence>MASGAPSFPFSRASGPEPPAEFAKLRATNPVSQVKLFDGSLAWLVTKHKDVCFVATSEKLSKVRTRQGFPELSASGKQAAKAKPTFVDMDPPEHMHQRSMVEPTFTPEAVKNLQPYIQRTVDDLLEQMKQKGCANGPVDLVKEFALPVPSYIIYTLLGVPFNDLEYLTQQNAIRTNGSSTAREASAANQELLDYLAILVEQRLVEPKDDIISKLCTEQVKPGNIDKSDAVQIAFLLLVAGNATMVNMIALGVATLAQHPDQLAQLKANPSLAPQFVEELCRYHTASALAIKRTAKEDVMIGDKLVRANEGIIASNQSANRDEEVFENPDEFNMNRKWPPQDPLGFGFGDHRCIAEHLAKAELTTVFSTLYQKFPDLKVAVPLGKINYTPLNRDVGIVDLPVIF</sequence>
<organism>
    <name type="scientific">Fusarium oxysporum</name>
    <name type="common">Fusarium vascular wilt</name>
    <dbReference type="NCBI Taxonomy" id="5507"/>
    <lineage>
        <taxon>Eukaryota</taxon>
        <taxon>Fungi</taxon>
        <taxon>Dikarya</taxon>
        <taxon>Ascomycota</taxon>
        <taxon>Pezizomycotina</taxon>
        <taxon>Sordariomycetes</taxon>
        <taxon>Hypocreomycetidae</taxon>
        <taxon>Hypocreales</taxon>
        <taxon>Nectriaceae</taxon>
        <taxon>Fusarium</taxon>
        <taxon>Fusarium oxysporum species complex</taxon>
    </lineage>
</organism>
<name>NOR_FUSOX</name>
<comment type="function">
    <text evidence="4 7">Nitric oxide reductase which is involved in a dissimilatory reduction of nitrite. Acts as a nitric oxide reductase. Is able to reduce nitrate and nitrite to a gaseous form of N(2)O when oxygen supply is limited or discontinued. May function as a detoxification mechanism.</text>
</comment>
<comment type="catalytic activity">
    <reaction evidence="2 5 7 8">
        <text>nitrous oxide + NADP(+) + H2O = 2 nitric oxide + NADPH + H(+)</text>
        <dbReference type="Rhea" id="RHEA:29611"/>
        <dbReference type="ChEBI" id="CHEBI:15377"/>
        <dbReference type="ChEBI" id="CHEBI:15378"/>
        <dbReference type="ChEBI" id="CHEBI:16480"/>
        <dbReference type="ChEBI" id="CHEBI:17045"/>
        <dbReference type="ChEBI" id="CHEBI:57783"/>
        <dbReference type="ChEBI" id="CHEBI:58349"/>
        <dbReference type="EC" id="1.7.1.14"/>
    </reaction>
</comment>
<comment type="catalytic activity">
    <reaction evidence="2 5 7 8">
        <text>nitrous oxide + NAD(+) + H2O = 2 nitric oxide + NADH + H(+)</text>
        <dbReference type="Rhea" id="RHEA:29607"/>
        <dbReference type="ChEBI" id="CHEBI:15377"/>
        <dbReference type="ChEBI" id="CHEBI:15378"/>
        <dbReference type="ChEBI" id="CHEBI:16480"/>
        <dbReference type="ChEBI" id="CHEBI:17045"/>
        <dbReference type="ChEBI" id="CHEBI:57540"/>
        <dbReference type="ChEBI" id="CHEBI:57945"/>
        <dbReference type="EC" id="1.7.1.14"/>
    </reaction>
</comment>
<comment type="cofactor">
    <cofactor>
        <name>heme</name>
        <dbReference type="ChEBI" id="CHEBI:30413"/>
    </cofactor>
</comment>
<comment type="activity regulation">
    <text evidence="7">Cyanide, CO, and oxygen strongly inhibit catalytic activity.</text>
</comment>
<comment type="induction">
    <text evidence="6">By nitrate/nitrite.</text>
</comment>
<comment type="similarity">
    <text evidence="10">Belongs to the cytochrome P450 family.</text>
</comment>
<gene>
    <name type="primary">CYP55A1</name>
    <name type="synonym">CYP55</name>
</gene>